<organism>
    <name type="scientific">Moorella thermoacetica (strain ATCC 39073 / JCM 9320)</name>
    <dbReference type="NCBI Taxonomy" id="264732"/>
    <lineage>
        <taxon>Bacteria</taxon>
        <taxon>Bacillati</taxon>
        <taxon>Bacillota</taxon>
        <taxon>Clostridia</taxon>
        <taxon>Moorellales</taxon>
        <taxon>Moorellaceae</taxon>
        <taxon>Moorella</taxon>
    </lineage>
</organism>
<protein>
    <recommendedName>
        <fullName evidence="1">Pyridinium-3,5-bisthiocarboxylic acid mononucleotide nickel insertion protein</fullName>
        <shortName evidence="1">P2TMN nickel insertion protein</shortName>
        <ecNumber evidence="1">4.99.1.12</ecNumber>
    </recommendedName>
    <alternativeName>
        <fullName evidence="1">Nickel-pincer cofactor biosynthesis protein LarC</fullName>
    </alternativeName>
</protein>
<dbReference type="EC" id="4.99.1.12" evidence="1"/>
<dbReference type="EMBL" id="CP000232">
    <property type="protein sequence ID" value="ABC20794.1"/>
    <property type="molecule type" value="Genomic_DNA"/>
</dbReference>
<dbReference type="RefSeq" id="YP_431337.1">
    <property type="nucleotide sequence ID" value="NC_007644.1"/>
</dbReference>
<dbReference type="SMR" id="Q2RFJ5"/>
<dbReference type="STRING" id="264732.Moth_2512"/>
<dbReference type="EnsemblBacteria" id="ABC20794">
    <property type="protein sequence ID" value="ABC20794"/>
    <property type="gene ID" value="Moth_2512"/>
</dbReference>
<dbReference type="KEGG" id="mta:Moth_2512"/>
<dbReference type="PATRIC" id="fig|264732.11.peg.2735"/>
<dbReference type="eggNOG" id="COG1641">
    <property type="taxonomic scope" value="Bacteria"/>
</dbReference>
<dbReference type="HOGENOM" id="CLU_028523_2_1_9"/>
<dbReference type="OrthoDB" id="9765625at2"/>
<dbReference type="GO" id="GO:0016829">
    <property type="term" value="F:lyase activity"/>
    <property type="evidence" value="ECO:0007669"/>
    <property type="project" value="UniProtKB-UniRule"/>
</dbReference>
<dbReference type="GO" id="GO:0016151">
    <property type="term" value="F:nickel cation binding"/>
    <property type="evidence" value="ECO:0007669"/>
    <property type="project" value="UniProtKB-UniRule"/>
</dbReference>
<dbReference type="GO" id="GO:0051604">
    <property type="term" value="P:protein maturation"/>
    <property type="evidence" value="ECO:0007669"/>
    <property type="project" value="UniProtKB-UniRule"/>
</dbReference>
<dbReference type="Gene3D" id="3.10.20.300">
    <property type="entry name" value="mk0293 like domain"/>
    <property type="match status" value="1"/>
</dbReference>
<dbReference type="Gene3D" id="3.30.70.1380">
    <property type="entry name" value="Transcriptional regulatory protein pf0864 domain like"/>
    <property type="match status" value="1"/>
</dbReference>
<dbReference type="HAMAP" id="MF_01074">
    <property type="entry name" value="LarC"/>
    <property type="match status" value="1"/>
</dbReference>
<dbReference type="InterPro" id="IPR002822">
    <property type="entry name" value="Ni_insertion"/>
</dbReference>
<dbReference type="NCBIfam" id="TIGR00299">
    <property type="entry name" value="nickel pincer cofactor biosynthesis protein LarC"/>
    <property type="match status" value="1"/>
</dbReference>
<dbReference type="PANTHER" id="PTHR36566">
    <property type="entry name" value="NICKEL INSERTION PROTEIN-RELATED"/>
    <property type="match status" value="1"/>
</dbReference>
<dbReference type="PANTHER" id="PTHR36566:SF1">
    <property type="entry name" value="PYRIDINIUM-3,5-BISTHIOCARBOXYLIC ACID MONONUCLEOTIDE NICKEL INSERTION PROTEIN"/>
    <property type="match status" value="1"/>
</dbReference>
<dbReference type="Pfam" id="PF01969">
    <property type="entry name" value="Ni_insertion"/>
    <property type="match status" value="1"/>
</dbReference>
<reference key="1">
    <citation type="journal article" date="2008" name="Environ. Microbiol.">
        <title>The complete genome sequence of Moorella thermoacetica (f. Clostridium thermoaceticum).</title>
        <authorList>
            <person name="Pierce E."/>
            <person name="Xie G."/>
            <person name="Barabote R.D."/>
            <person name="Saunders E."/>
            <person name="Han C.S."/>
            <person name="Detter J.C."/>
            <person name="Richardson P."/>
            <person name="Brettin T.S."/>
            <person name="Das A."/>
            <person name="Ljungdahl L.G."/>
            <person name="Ragsdale S.W."/>
        </authorList>
    </citation>
    <scope>NUCLEOTIDE SEQUENCE [LARGE SCALE GENOMIC DNA]</scope>
    <source>
        <strain>ATCC 39073 / JCM 9320</strain>
    </source>
</reference>
<proteinExistence type="inferred from homology"/>
<accession>Q2RFJ5</accession>
<evidence type="ECO:0000255" key="1">
    <source>
        <dbReference type="HAMAP-Rule" id="MF_01074"/>
    </source>
</evidence>
<comment type="function">
    <text evidence="1">Involved in the biosynthesis of a nickel-pincer cofactor ((SCS)Ni(II) pincer complex). Binds Ni(2+), and functions in nickel delivery to pyridinium-3,5-bisthiocarboxylic acid mononucleotide (P2TMN), to form the mature cofactor. Is thus probably required for the activation of nickel-pincer cofactor-dependent enzymes.</text>
</comment>
<comment type="catalytic activity">
    <reaction evidence="1">
        <text>Ni(II)-pyridinium-3,5-bisthiocarboxylate mononucleotide = pyridinium-3,5-bisthiocarboxylate mononucleotide + Ni(2+)</text>
        <dbReference type="Rhea" id="RHEA:54784"/>
        <dbReference type="ChEBI" id="CHEBI:49786"/>
        <dbReference type="ChEBI" id="CHEBI:137372"/>
        <dbReference type="ChEBI" id="CHEBI:137373"/>
        <dbReference type="EC" id="4.99.1.12"/>
    </reaction>
</comment>
<comment type="similarity">
    <text evidence="1">Belongs to the LarC family.</text>
</comment>
<sequence length="396" mass="42016">MKIAYFDCFSGISGDMCLGALIACGLSQDELTSGLKGLGLEGWELRVREVKQHSIAATDVAVQVTGSQPHRHLADILGLINNSSLPAPVKEKSAAVFKNLARAEGQVHGIDASQVHFHEVGAVDAIIDIVGSILGLHLLGIEKVISSPLPAGSGWVDCRHGKLPVPAPATLYLLQGYPVYGTEDKAELVTPTGAALITTLADSFGPFPAMNLTRVGFGAGKTELPHPNLLRLALGEINSGQLEGEESSLVIETTIDDMNPEFFPALLEETMAAGAVDAFFTPVQMKKGRPGILFTALCPENKLAAVAAAIFTHSSTLGLRFRRDQRLVCQRRMAEVVTPYGTVPVKLGLYRDPTGQVITNIAPEYESCRQIAKSAGAPLKEVYAAALAAARALKAF</sequence>
<gene>
    <name evidence="1" type="primary">larC</name>
    <name type="ordered locus">Moth_2512</name>
</gene>
<keyword id="KW-0456">Lyase</keyword>
<keyword id="KW-0533">Nickel</keyword>
<name>LARC_MOOTA</name>
<feature type="chain" id="PRO_1000064654" description="Pyridinium-3,5-bisthiocarboxylic acid mononucleotide nickel insertion protein">
    <location>
        <begin position="1"/>
        <end position="396"/>
    </location>
</feature>